<name>CASP1_SOLDE</name>
<evidence type="ECO:0000250" key="1"/>
<evidence type="ECO:0000255" key="2"/>
<evidence type="ECO:0000305" key="3"/>
<dbReference type="EMBL" id="AC151803">
    <property type="protein sequence ID" value="AAU90311.1"/>
    <property type="molecule type" value="Genomic_DNA"/>
</dbReference>
<dbReference type="SMR" id="Q60D27"/>
<dbReference type="GO" id="GO:0005886">
    <property type="term" value="C:plasma membrane"/>
    <property type="evidence" value="ECO:0007669"/>
    <property type="project" value="UniProtKB-SubCell"/>
</dbReference>
<dbReference type="GO" id="GO:0071555">
    <property type="term" value="P:cell wall organization"/>
    <property type="evidence" value="ECO:0007669"/>
    <property type="project" value="UniProtKB-KW"/>
</dbReference>
<dbReference type="InterPro" id="IPR006459">
    <property type="entry name" value="CASP/CASPL"/>
</dbReference>
<dbReference type="InterPro" id="IPR006702">
    <property type="entry name" value="CASP_dom"/>
</dbReference>
<dbReference type="InterPro" id="IPR044173">
    <property type="entry name" value="CASPL"/>
</dbReference>
<dbReference type="NCBIfam" id="TIGR01569">
    <property type="entry name" value="A_tha_TIGR01569"/>
    <property type="match status" value="1"/>
</dbReference>
<dbReference type="PANTHER" id="PTHR36488:SF12">
    <property type="entry name" value="CASP-LIKE PROTEIN"/>
    <property type="match status" value="1"/>
</dbReference>
<dbReference type="PANTHER" id="PTHR36488">
    <property type="entry name" value="CASP-LIKE PROTEIN 1U1"/>
    <property type="match status" value="1"/>
</dbReference>
<dbReference type="Pfam" id="PF04535">
    <property type="entry name" value="CASP_dom"/>
    <property type="match status" value="1"/>
</dbReference>
<protein>
    <recommendedName>
        <fullName>Casparian strip membrane protein 1</fullName>
        <shortName>SdCASP1</shortName>
    </recommendedName>
</protein>
<gene>
    <name type="ORF">SDM1_55t00014</name>
</gene>
<sequence length="185" mass="19784">MKAVSIEAGERSKAKRVHGVNRGISVFDLVLRIVALVGTLASAVAMGTAGQALSFSTQIVNFEAQYDDIDAFKFFVVSNSITCVYLALSIPISIFHIIRSRAGKSRVLLIVLDAIMLVFLTSGASAAAAIVYLAHNGNTSTNWFSICQQYTDFCQRSAGSLIGSFGAMALMVLLIILSSIALSRR</sequence>
<organism>
    <name type="scientific">Solanum demissum</name>
    <name type="common">Wild potato</name>
    <dbReference type="NCBI Taxonomy" id="50514"/>
    <lineage>
        <taxon>Eukaryota</taxon>
        <taxon>Viridiplantae</taxon>
        <taxon>Streptophyta</taxon>
        <taxon>Embryophyta</taxon>
        <taxon>Tracheophyta</taxon>
        <taxon>Spermatophyta</taxon>
        <taxon>Magnoliopsida</taxon>
        <taxon>eudicotyledons</taxon>
        <taxon>Gunneridae</taxon>
        <taxon>Pentapetalae</taxon>
        <taxon>asterids</taxon>
        <taxon>lamiids</taxon>
        <taxon>Solanales</taxon>
        <taxon>Solanaceae</taxon>
        <taxon>Solanoideae</taxon>
        <taxon>Solaneae</taxon>
        <taxon>Solanum</taxon>
    </lineage>
</organism>
<keyword id="KW-1003">Cell membrane</keyword>
<keyword id="KW-0961">Cell wall biogenesis/degradation</keyword>
<keyword id="KW-0325">Glycoprotein</keyword>
<keyword id="KW-0472">Membrane</keyword>
<keyword id="KW-0812">Transmembrane</keyword>
<keyword id="KW-1133">Transmembrane helix</keyword>
<feature type="chain" id="PRO_0000370729" description="Casparian strip membrane protein 1">
    <location>
        <begin position="1"/>
        <end position="185"/>
    </location>
</feature>
<feature type="topological domain" description="Cytoplasmic" evidence="2">
    <location>
        <begin position="1"/>
        <end position="32"/>
    </location>
</feature>
<feature type="transmembrane region" description="Helical" evidence="2">
    <location>
        <begin position="33"/>
        <end position="53"/>
    </location>
</feature>
<feature type="topological domain" description="Extracellular" evidence="2">
    <location>
        <begin position="54"/>
        <end position="73"/>
    </location>
</feature>
<feature type="transmembrane region" description="Helical" evidence="2">
    <location>
        <begin position="74"/>
        <end position="94"/>
    </location>
</feature>
<feature type="topological domain" description="Cytoplasmic" evidence="2">
    <location>
        <begin position="95"/>
        <end position="106"/>
    </location>
</feature>
<feature type="transmembrane region" description="Helical" evidence="2">
    <location>
        <begin position="107"/>
        <end position="127"/>
    </location>
</feature>
<feature type="topological domain" description="Extracellular" evidence="2">
    <location>
        <begin position="128"/>
        <end position="160"/>
    </location>
</feature>
<feature type="transmembrane region" description="Helical" evidence="2">
    <location>
        <begin position="161"/>
        <end position="181"/>
    </location>
</feature>
<feature type="topological domain" description="Cytoplasmic" evidence="2">
    <location>
        <begin position="182"/>
        <end position="185"/>
    </location>
</feature>
<feature type="glycosylation site" description="N-linked (GlcNAc...) asparagine" evidence="2">
    <location>
        <position position="138"/>
    </location>
</feature>
<reference key="1">
    <citation type="submission" date="2004-12" db="EMBL/GenBank/DDBJ databases">
        <authorList>
            <person name="Buell R."/>
            <person name="Liu J."/>
            <person name="Childs K."/>
            <person name="Zaborsky J."/>
            <person name="Tallon L."/>
            <person name="Wirtz U."/>
            <person name="Wei F."/>
            <person name="Kuang H."/>
            <person name="Zhang P."/>
            <person name="Marano M."/>
            <person name="Baker B."/>
        </authorList>
    </citation>
    <scope>NUCLEOTIDE SEQUENCE [LARGE SCALE GENOMIC DNA]</scope>
</reference>
<reference key="2">
    <citation type="journal article" date="2014" name="Plant Physiol.">
        <title>Functional and evolutionary analysis of the CASPARIAN STRIP MEMBRANE DOMAIN PROTEIN family.</title>
        <authorList>
            <person name="Roppolo D."/>
            <person name="Boeckmann B."/>
            <person name="Pfister A."/>
            <person name="Boutet E."/>
            <person name="Rubio M.C."/>
            <person name="Denervaud-Tendon V."/>
            <person name="Vermeer J.E."/>
            <person name="Gheyselinck J."/>
            <person name="Xenarios I."/>
            <person name="Geldner N."/>
        </authorList>
    </citation>
    <scope>GENE FAMILY</scope>
    <scope>NOMENCLATURE</scope>
</reference>
<comment type="function">
    <text evidence="1">Regulates membrane-cell wall junctions and localized cell wall deposition. Required for establishment of the Casparian strip membrane domain (CSD) and the subsequent formation of Casparian strips, a cell wall modification of the root endodermis that determines an apoplastic barrier between the intraorganismal apoplasm and the extraorganismal apoplasm and prevents lateral diffusion (By similarity).</text>
</comment>
<comment type="subunit">
    <text evidence="1">Homodimer and heterodimers.</text>
</comment>
<comment type="subcellular location">
    <subcellularLocation>
        <location evidence="1">Cell membrane</location>
        <topology evidence="1">Multi-pass membrane protein</topology>
    </subcellularLocation>
    <text evidence="1">Very restricted localization following a belt shape within the plasma membrane which coincides with the position of the Casparian strip membrane domain in the root endodermis.</text>
</comment>
<comment type="similarity">
    <text evidence="3">Belongs to the Casparian strip membrane proteins (CASP) family.</text>
</comment>
<proteinExistence type="inferred from homology"/>
<accession>Q60D27</accession>